<keyword id="KW-0963">Cytoplasm</keyword>
<keyword id="KW-0275">Fatty acid biosynthesis</keyword>
<keyword id="KW-0276">Fatty acid metabolism</keyword>
<keyword id="KW-0444">Lipid biosynthesis</keyword>
<keyword id="KW-0443">Lipid metabolism</keyword>
<keyword id="KW-0460">Magnesium</keyword>
<keyword id="KW-0479">Metal-binding</keyword>
<keyword id="KW-1185">Reference proteome</keyword>
<keyword id="KW-0808">Transferase</keyword>
<proteinExistence type="inferred from homology"/>
<name>ACPS_STRSV</name>
<dbReference type="EC" id="2.7.8.7" evidence="1"/>
<dbReference type="EMBL" id="CP000387">
    <property type="protein sequence ID" value="ABN43991.1"/>
    <property type="molecule type" value="Genomic_DNA"/>
</dbReference>
<dbReference type="RefSeq" id="WP_011836581.1">
    <property type="nucleotide sequence ID" value="NC_009009.1"/>
</dbReference>
<dbReference type="RefSeq" id="YP_001034541.1">
    <property type="nucleotide sequence ID" value="NC_009009.1"/>
</dbReference>
<dbReference type="SMR" id="A3CLD6"/>
<dbReference type="STRING" id="388919.SSA_0547"/>
<dbReference type="KEGG" id="ssa:SSA_0547"/>
<dbReference type="PATRIC" id="fig|388919.9.peg.527"/>
<dbReference type="eggNOG" id="COG0736">
    <property type="taxonomic scope" value="Bacteria"/>
</dbReference>
<dbReference type="HOGENOM" id="CLU_089696_1_2_9"/>
<dbReference type="OrthoDB" id="517356at2"/>
<dbReference type="Proteomes" id="UP000002148">
    <property type="component" value="Chromosome"/>
</dbReference>
<dbReference type="GO" id="GO:0005737">
    <property type="term" value="C:cytoplasm"/>
    <property type="evidence" value="ECO:0007669"/>
    <property type="project" value="UniProtKB-SubCell"/>
</dbReference>
<dbReference type="GO" id="GO:0008897">
    <property type="term" value="F:holo-[acyl-carrier-protein] synthase activity"/>
    <property type="evidence" value="ECO:0007669"/>
    <property type="project" value="UniProtKB-UniRule"/>
</dbReference>
<dbReference type="GO" id="GO:0000287">
    <property type="term" value="F:magnesium ion binding"/>
    <property type="evidence" value="ECO:0007669"/>
    <property type="project" value="UniProtKB-UniRule"/>
</dbReference>
<dbReference type="GO" id="GO:0006633">
    <property type="term" value="P:fatty acid biosynthetic process"/>
    <property type="evidence" value="ECO:0007669"/>
    <property type="project" value="UniProtKB-UniRule"/>
</dbReference>
<dbReference type="Gene3D" id="3.90.470.20">
    <property type="entry name" value="4'-phosphopantetheinyl transferase domain"/>
    <property type="match status" value="1"/>
</dbReference>
<dbReference type="HAMAP" id="MF_00101">
    <property type="entry name" value="AcpS"/>
    <property type="match status" value="1"/>
</dbReference>
<dbReference type="InterPro" id="IPR008278">
    <property type="entry name" value="4-PPantetheinyl_Trfase_dom"/>
</dbReference>
<dbReference type="InterPro" id="IPR037143">
    <property type="entry name" value="4-PPantetheinyl_Trfase_dom_sf"/>
</dbReference>
<dbReference type="InterPro" id="IPR002582">
    <property type="entry name" value="ACPS"/>
</dbReference>
<dbReference type="InterPro" id="IPR004568">
    <property type="entry name" value="Ppantetheine-prot_Trfase_dom"/>
</dbReference>
<dbReference type="NCBIfam" id="TIGR00516">
    <property type="entry name" value="acpS"/>
    <property type="match status" value="1"/>
</dbReference>
<dbReference type="NCBIfam" id="TIGR00556">
    <property type="entry name" value="pantethn_trn"/>
    <property type="match status" value="1"/>
</dbReference>
<dbReference type="Pfam" id="PF01648">
    <property type="entry name" value="ACPS"/>
    <property type="match status" value="1"/>
</dbReference>
<dbReference type="SUPFAM" id="SSF56214">
    <property type="entry name" value="4'-phosphopantetheinyl transferase"/>
    <property type="match status" value="1"/>
</dbReference>
<accession>A3CLD6</accession>
<comment type="function">
    <text evidence="1">Transfers the 4'-phosphopantetheine moiety from coenzyme A to a Ser of acyl-carrier-protein.</text>
</comment>
<comment type="catalytic activity">
    <reaction evidence="1">
        <text>apo-[ACP] + CoA = holo-[ACP] + adenosine 3',5'-bisphosphate + H(+)</text>
        <dbReference type="Rhea" id="RHEA:12068"/>
        <dbReference type="Rhea" id="RHEA-COMP:9685"/>
        <dbReference type="Rhea" id="RHEA-COMP:9690"/>
        <dbReference type="ChEBI" id="CHEBI:15378"/>
        <dbReference type="ChEBI" id="CHEBI:29999"/>
        <dbReference type="ChEBI" id="CHEBI:57287"/>
        <dbReference type="ChEBI" id="CHEBI:58343"/>
        <dbReference type="ChEBI" id="CHEBI:64479"/>
        <dbReference type="EC" id="2.7.8.7"/>
    </reaction>
</comment>
<comment type="cofactor">
    <cofactor evidence="1">
        <name>Mg(2+)</name>
        <dbReference type="ChEBI" id="CHEBI:18420"/>
    </cofactor>
</comment>
<comment type="subcellular location">
    <subcellularLocation>
        <location evidence="1">Cytoplasm</location>
    </subcellularLocation>
</comment>
<comment type="similarity">
    <text evidence="1">Belongs to the P-Pant transferase superfamily. AcpS family.</text>
</comment>
<organism>
    <name type="scientific">Streptococcus sanguinis (strain SK36)</name>
    <dbReference type="NCBI Taxonomy" id="388919"/>
    <lineage>
        <taxon>Bacteria</taxon>
        <taxon>Bacillati</taxon>
        <taxon>Bacillota</taxon>
        <taxon>Bacilli</taxon>
        <taxon>Lactobacillales</taxon>
        <taxon>Streptococcaceae</taxon>
        <taxon>Streptococcus</taxon>
    </lineage>
</organism>
<feature type="chain" id="PRO_1000008516" description="Holo-[acyl-carrier-protein] synthase">
    <location>
        <begin position="1"/>
        <end position="120"/>
    </location>
</feature>
<feature type="binding site" evidence="1">
    <location>
        <position position="8"/>
    </location>
    <ligand>
        <name>Mg(2+)</name>
        <dbReference type="ChEBI" id="CHEBI:18420"/>
    </ligand>
</feature>
<feature type="binding site" evidence="1">
    <location>
        <position position="58"/>
    </location>
    <ligand>
        <name>Mg(2+)</name>
        <dbReference type="ChEBI" id="CHEBI:18420"/>
    </ligand>
</feature>
<sequence>MIKGHGIDIEELVAIERAYLKNARFAKKVLTEAELSRFEELSGKRKIEFLAGRWAAKEAFSKAWGTGIGKLRFQDLEILNDRQGAPYFSRSPFTGKVWISLSHAAGLVTASVILEENDES</sequence>
<evidence type="ECO:0000255" key="1">
    <source>
        <dbReference type="HAMAP-Rule" id="MF_00101"/>
    </source>
</evidence>
<gene>
    <name evidence="1" type="primary">acpS</name>
    <name type="ordered locus">SSA_0547</name>
</gene>
<protein>
    <recommendedName>
        <fullName evidence="1">Holo-[acyl-carrier-protein] synthase</fullName>
        <shortName evidence="1">Holo-ACP synthase</shortName>
        <ecNumber evidence="1">2.7.8.7</ecNumber>
    </recommendedName>
    <alternativeName>
        <fullName evidence="1">4'-phosphopantetheinyl transferase AcpS</fullName>
    </alternativeName>
</protein>
<reference key="1">
    <citation type="journal article" date="2007" name="J. Bacteriol.">
        <title>Genome of the opportunistic pathogen Streptococcus sanguinis.</title>
        <authorList>
            <person name="Xu P."/>
            <person name="Alves J.M."/>
            <person name="Kitten T."/>
            <person name="Brown A."/>
            <person name="Chen Z."/>
            <person name="Ozaki L.S."/>
            <person name="Manque P."/>
            <person name="Ge X."/>
            <person name="Serrano M.G."/>
            <person name="Puiu D."/>
            <person name="Hendricks S."/>
            <person name="Wang Y."/>
            <person name="Chaplin M.D."/>
            <person name="Akan D."/>
            <person name="Paik S."/>
            <person name="Peterson D.L."/>
            <person name="Macrina F.L."/>
            <person name="Buck G.A."/>
        </authorList>
    </citation>
    <scope>NUCLEOTIDE SEQUENCE [LARGE SCALE GENOMIC DNA]</scope>
    <source>
        <strain>SK36</strain>
    </source>
</reference>